<dbReference type="EMBL" id="CP000527">
    <property type="protein sequence ID" value="ABM27474.1"/>
    <property type="molecule type" value="Genomic_DNA"/>
</dbReference>
<dbReference type="RefSeq" id="WP_010940174.1">
    <property type="nucleotide sequence ID" value="NC_008751.1"/>
</dbReference>
<dbReference type="SMR" id="A1VAK8"/>
<dbReference type="KEGG" id="dvl:Dvul_0451"/>
<dbReference type="HOGENOM" id="CLU_036856_0_1_7"/>
<dbReference type="Proteomes" id="UP000009173">
    <property type="component" value="Chromosome"/>
</dbReference>
<dbReference type="GO" id="GO:0005737">
    <property type="term" value="C:cytoplasm"/>
    <property type="evidence" value="ECO:0007669"/>
    <property type="project" value="UniProtKB-SubCell"/>
</dbReference>
<dbReference type="GO" id="GO:0016149">
    <property type="term" value="F:translation release factor activity, codon specific"/>
    <property type="evidence" value="ECO:0007669"/>
    <property type="project" value="UniProtKB-UniRule"/>
</dbReference>
<dbReference type="FunFam" id="3.30.160.20:FF:000004">
    <property type="entry name" value="Peptide chain release factor 1"/>
    <property type="match status" value="1"/>
</dbReference>
<dbReference type="FunFam" id="3.30.70.1660:FF:000002">
    <property type="entry name" value="Peptide chain release factor 1"/>
    <property type="match status" value="1"/>
</dbReference>
<dbReference type="FunFam" id="3.30.70.1660:FF:000004">
    <property type="entry name" value="Peptide chain release factor 1"/>
    <property type="match status" value="1"/>
</dbReference>
<dbReference type="Gene3D" id="3.30.160.20">
    <property type="match status" value="1"/>
</dbReference>
<dbReference type="Gene3D" id="3.30.70.1660">
    <property type="match status" value="1"/>
</dbReference>
<dbReference type="Gene3D" id="6.10.140.1950">
    <property type="match status" value="1"/>
</dbReference>
<dbReference type="HAMAP" id="MF_00093">
    <property type="entry name" value="Rel_fac_1"/>
    <property type="match status" value="1"/>
</dbReference>
<dbReference type="InterPro" id="IPR005139">
    <property type="entry name" value="PCRF"/>
</dbReference>
<dbReference type="InterPro" id="IPR000352">
    <property type="entry name" value="Pep_chain_release_fac_I"/>
</dbReference>
<dbReference type="InterPro" id="IPR045853">
    <property type="entry name" value="Pep_chain_release_fac_I_sf"/>
</dbReference>
<dbReference type="InterPro" id="IPR050057">
    <property type="entry name" value="Prokaryotic/Mito_RF"/>
</dbReference>
<dbReference type="InterPro" id="IPR004373">
    <property type="entry name" value="RF-1"/>
</dbReference>
<dbReference type="NCBIfam" id="TIGR00019">
    <property type="entry name" value="prfA"/>
    <property type="match status" value="1"/>
</dbReference>
<dbReference type="NCBIfam" id="NF001859">
    <property type="entry name" value="PRK00591.1"/>
    <property type="match status" value="1"/>
</dbReference>
<dbReference type="PANTHER" id="PTHR43804">
    <property type="entry name" value="LD18447P"/>
    <property type="match status" value="1"/>
</dbReference>
<dbReference type="PANTHER" id="PTHR43804:SF7">
    <property type="entry name" value="LD18447P"/>
    <property type="match status" value="1"/>
</dbReference>
<dbReference type="Pfam" id="PF03462">
    <property type="entry name" value="PCRF"/>
    <property type="match status" value="1"/>
</dbReference>
<dbReference type="Pfam" id="PF00472">
    <property type="entry name" value="RF-1"/>
    <property type="match status" value="1"/>
</dbReference>
<dbReference type="SMART" id="SM00937">
    <property type="entry name" value="PCRF"/>
    <property type="match status" value="1"/>
</dbReference>
<dbReference type="SUPFAM" id="SSF75620">
    <property type="entry name" value="Release factor"/>
    <property type="match status" value="1"/>
</dbReference>
<dbReference type="PROSITE" id="PS00745">
    <property type="entry name" value="RF_PROK_I"/>
    <property type="match status" value="1"/>
</dbReference>
<reference key="1">
    <citation type="journal article" date="2009" name="Environ. Microbiol.">
        <title>Contribution of mobile genetic elements to Desulfovibrio vulgaris genome plasticity.</title>
        <authorList>
            <person name="Walker C.B."/>
            <person name="Stolyar S."/>
            <person name="Chivian D."/>
            <person name="Pinel N."/>
            <person name="Gabster J.A."/>
            <person name="Dehal P.S."/>
            <person name="He Z."/>
            <person name="Yang Z.K."/>
            <person name="Yen H.C."/>
            <person name="Zhou J."/>
            <person name="Wall J.D."/>
            <person name="Hazen T.C."/>
            <person name="Arkin A.P."/>
            <person name="Stahl D.A."/>
        </authorList>
    </citation>
    <scope>NUCLEOTIDE SEQUENCE [LARGE SCALE GENOMIC DNA]</scope>
    <source>
        <strain>DP4</strain>
    </source>
</reference>
<protein>
    <recommendedName>
        <fullName evidence="1">Peptide chain release factor 1</fullName>
        <shortName evidence="1">RF-1</shortName>
    </recommendedName>
</protein>
<feature type="chain" id="PRO_1000004886" description="Peptide chain release factor 1">
    <location>
        <begin position="1"/>
        <end position="357"/>
    </location>
</feature>
<feature type="modified residue" description="N5-methylglutamine" evidence="1">
    <location>
        <position position="232"/>
    </location>
</feature>
<organism>
    <name type="scientific">Nitratidesulfovibrio vulgaris (strain DP4)</name>
    <name type="common">Desulfovibrio vulgaris</name>
    <dbReference type="NCBI Taxonomy" id="391774"/>
    <lineage>
        <taxon>Bacteria</taxon>
        <taxon>Pseudomonadati</taxon>
        <taxon>Thermodesulfobacteriota</taxon>
        <taxon>Desulfovibrionia</taxon>
        <taxon>Desulfovibrionales</taxon>
        <taxon>Desulfovibrionaceae</taxon>
        <taxon>Nitratidesulfovibrio</taxon>
    </lineage>
</organism>
<name>RF1_NITV4</name>
<accession>A1VAK8</accession>
<evidence type="ECO:0000255" key="1">
    <source>
        <dbReference type="HAMAP-Rule" id="MF_00093"/>
    </source>
</evidence>
<proteinExistence type="inferred from homology"/>
<gene>
    <name evidence="1" type="primary">prfA</name>
    <name type="ordered locus">Dvul_0451</name>
</gene>
<comment type="function">
    <text evidence="1">Peptide chain release factor 1 directs the termination of translation in response to the peptide chain termination codons UAG and UAA.</text>
</comment>
<comment type="subcellular location">
    <subcellularLocation>
        <location evidence="1">Cytoplasm</location>
    </subcellularLocation>
</comment>
<comment type="PTM">
    <text evidence="1">Methylated by PrmC. Methylation increases the termination efficiency of RF1.</text>
</comment>
<comment type="similarity">
    <text evidence="1">Belongs to the prokaryotic/mitochondrial release factor family.</text>
</comment>
<sequence length="357" mass="39977">MFAKLENLELKFEDLEQQLSSAEVFNDQDRYRKLTKAHADLKQVVDAFRRYKEMKQNLADNKELLGDSDHEIRAMAHEEIKAIEAALPDIEQELKILLLPRDPMDDKNILLEIRAGTGGEEASLFAADLFRMYTRYAEIMGWKVEVLSASDSDTGGYKEIIALIAGDKVYSRLKYESGTHRVQRVPATEAQGRIHTSAATVAVMPEAEEVDVDIRPDDLRIDVYRASGAGGQHVNKTESAVRITHLPTGIVVACQDEKSQHKNKAKAMKVLISRVLQAEQERAHSVIADARRALVGSGDRSERIRTYNYPQSRITDHRINLTLYSLDKVMEGELAPLVDALVTHAQTEALKAQADAS</sequence>
<keyword id="KW-0963">Cytoplasm</keyword>
<keyword id="KW-0488">Methylation</keyword>
<keyword id="KW-0648">Protein biosynthesis</keyword>